<proteinExistence type="inferred from homology"/>
<feature type="chain" id="PRO_0000142006" description="1-(5-phosphoribosyl)-5-[(5-phosphoribosylamino)methylideneamino] imidazole-4-carboxamide isomerase">
    <location>
        <begin position="1"/>
        <end position="245"/>
    </location>
</feature>
<feature type="active site" description="Proton acceptor" evidence="1">
    <location>
        <position position="7"/>
    </location>
</feature>
<feature type="active site" description="Proton donor" evidence="1">
    <location>
        <position position="129"/>
    </location>
</feature>
<keyword id="KW-0028">Amino-acid biosynthesis</keyword>
<keyword id="KW-0963">Cytoplasm</keyword>
<keyword id="KW-0368">Histidine biosynthesis</keyword>
<keyword id="KW-0413">Isomerase</keyword>
<keyword id="KW-1185">Reference proteome</keyword>
<reference key="1">
    <citation type="journal article" date="1999" name="Microb. Pathog.">
        <title>Analysis of the genes responsible for the O-antigen synthesis in enterohaemorrhagic Escherichia coli O157.</title>
        <authorList>
            <person name="Shimizu T."/>
            <person name="Yamasaki S."/>
            <person name="Tsukamoto T."/>
            <person name="Takeda Y."/>
        </authorList>
    </citation>
    <scope>NUCLEOTIDE SEQUENCE [GENOMIC DNA]</scope>
    <source>
        <strain>O157:H- / 184 / EHEC</strain>
    </source>
</reference>
<reference key="2">
    <citation type="journal article" date="2001" name="Nature">
        <title>Genome sequence of enterohaemorrhagic Escherichia coli O157:H7.</title>
        <authorList>
            <person name="Perna N.T."/>
            <person name="Plunkett G. III"/>
            <person name="Burland V."/>
            <person name="Mau B."/>
            <person name="Glasner J.D."/>
            <person name="Rose D.J."/>
            <person name="Mayhew G.F."/>
            <person name="Evans P.S."/>
            <person name="Gregor J."/>
            <person name="Kirkpatrick H.A."/>
            <person name="Posfai G."/>
            <person name="Hackett J."/>
            <person name="Klink S."/>
            <person name="Boutin A."/>
            <person name="Shao Y."/>
            <person name="Miller L."/>
            <person name="Grotbeck E.J."/>
            <person name="Davis N.W."/>
            <person name="Lim A."/>
            <person name="Dimalanta E.T."/>
            <person name="Potamousis K."/>
            <person name="Apodaca J."/>
            <person name="Anantharaman T.S."/>
            <person name="Lin J."/>
            <person name="Yen G."/>
            <person name="Schwartz D.C."/>
            <person name="Welch R.A."/>
            <person name="Blattner F.R."/>
        </authorList>
    </citation>
    <scope>NUCLEOTIDE SEQUENCE [LARGE SCALE GENOMIC DNA]</scope>
    <source>
        <strain>O157:H7 / EDL933 / ATCC 700927 / EHEC</strain>
    </source>
</reference>
<reference key="3">
    <citation type="journal article" date="2001" name="DNA Res.">
        <title>Complete genome sequence of enterohemorrhagic Escherichia coli O157:H7 and genomic comparison with a laboratory strain K-12.</title>
        <authorList>
            <person name="Hayashi T."/>
            <person name="Makino K."/>
            <person name="Ohnishi M."/>
            <person name="Kurokawa K."/>
            <person name="Ishii K."/>
            <person name="Yokoyama K."/>
            <person name="Han C.-G."/>
            <person name="Ohtsubo E."/>
            <person name="Nakayama K."/>
            <person name="Murata T."/>
            <person name="Tanaka M."/>
            <person name="Tobe T."/>
            <person name="Iida T."/>
            <person name="Takami H."/>
            <person name="Honda T."/>
            <person name="Sasakawa C."/>
            <person name="Ogasawara N."/>
            <person name="Yasunaga T."/>
            <person name="Kuhara S."/>
            <person name="Shiba T."/>
            <person name="Hattori M."/>
            <person name="Shinagawa H."/>
        </authorList>
    </citation>
    <scope>NUCLEOTIDE SEQUENCE [LARGE SCALE GENOMIC DNA]</scope>
    <source>
        <strain>O157:H7 / Sakai / RIMD 0509952 / EHEC</strain>
    </source>
</reference>
<comment type="catalytic activity">
    <reaction>
        <text>1-(5-phospho-beta-D-ribosyl)-5-[(5-phospho-beta-D-ribosylamino)methylideneamino]imidazole-4-carboxamide = 5-[(5-phospho-1-deoxy-D-ribulos-1-ylimino)methylamino]-1-(5-phospho-beta-D-ribosyl)imidazole-4-carboxamide</text>
        <dbReference type="Rhea" id="RHEA:15469"/>
        <dbReference type="ChEBI" id="CHEBI:58435"/>
        <dbReference type="ChEBI" id="CHEBI:58525"/>
        <dbReference type="EC" id="5.3.1.16"/>
    </reaction>
</comment>
<comment type="pathway">
    <text>Amino-acid biosynthesis; L-histidine biosynthesis; L-histidine from 5-phospho-alpha-D-ribose 1-diphosphate: step 4/9.</text>
</comment>
<comment type="subunit">
    <text evidence="1">Monomer.</text>
</comment>
<comment type="subcellular location">
    <subcellularLocation>
        <location evidence="1">Cytoplasm</location>
    </subcellularLocation>
</comment>
<comment type="similarity">
    <text evidence="2">Belongs to the HisA/HisF family.</text>
</comment>
<comment type="sequence caution" evidence="2">
    <conflict type="erroneous initiation">
        <sequence resource="EMBL-CDS" id="AAG57083"/>
    </conflict>
</comment>
<comment type="sequence caution" evidence="2">
    <conflict type="erroneous initiation">
        <sequence resource="EMBL-CDS" id="BAB36248"/>
    </conflict>
</comment>
<gene>
    <name type="primary">hisA</name>
    <name type="ordered locus">Z3186</name>
    <name type="ordered locus">ECs2825</name>
</gene>
<protein>
    <recommendedName>
        <fullName>1-(5-phosphoribosyl)-5-[(5-phosphoribosylamino)methylideneamino] imidazole-4-carboxamide isomerase</fullName>
        <ecNumber>5.3.1.16</ecNumber>
    </recommendedName>
    <alternativeName>
        <fullName>Phosphoribosylformimino-5-aminoimidazole carboxamide ribotide isomerase</fullName>
    </alternativeName>
</protein>
<name>HIS4_ECO57</name>
<sequence length="245" mass="26031">MIIPALDLIDGTVVRLHQGDYGKQRDYGNDPLPRLQDYAAQGAEVLHLVDLTGAKDPAKRQIPLIKTLVAGVNVPVQVGGGVRSEEDVAALLEAGVARVVVGSTAVKSPEMVKGWFERFGADALVLALDVRIDEQGNKQVAVSGWQENSGVSLEQLVETYLPVGLKHVLCTDISRDGTLAGSNVSLYEEVCARYPQVAFQSSGGIGDINDVAALRGTGVRGVIVGRALLEGKFTVKEAISCWQNA</sequence>
<evidence type="ECO:0000250" key="1"/>
<evidence type="ECO:0000305" key="2"/>
<dbReference type="EC" id="5.3.1.16"/>
<dbReference type="EMBL" id="AB008676">
    <property type="protein sequence ID" value="BAA77741.1"/>
    <property type="molecule type" value="Genomic_DNA"/>
</dbReference>
<dbReference type="EMBL" id="AE005174">
    <property type="protein sequence ID" value="AAG57083.1"/>
    <property type="status" value="ALT_INIT"/>
    <property type="molecule type" value="Genomic_DNA"/>
</dbReference>
<dbReference type="EMBL" id="BA000007">
    <property type="protein sequence ID" value="BAB36248.1"/>
    <property type="status" value="ALT_INIT"/>
    <property type="molecule type" value="Genomic_DNA"/>
</dbReference>
<dbReference type="PIR" id="A98982">
    <property type="entry name" value="A98982"/>
</dbReference>
<dbReference type="PIR" id="G85827">
    <property type="entry name" value="G85827"/>
</dbReference>
<dbReference type="RefSeq" id="NP_310852.2">
    <property type="nucleotide sequence ID" value="NC_002695.1"/>
</dbReference>
<dbReference type="RefSeq" id="WP_000586451.1">
    <property type="nucleotide sequence ID" value="NZ_VOAI01000013.1"/>
</dbReference>
<dbReference type="SMR" id="Q9S5G4"/>
<dbReference type="STRING" id="155864.Z3186"/>
<dbReference type="GeneID" id="912886"/>
<dbReference type="KEGG" id="ece:Z3186"/>
<dbReference type="KEGG" id="ecs:ECs_2825"/>
<dbReference type="PATRIC" id="fig|386585.9.peg.2960"/>
<dbReference type="eggNOG" id="COG0106">
    <property type="taxonomic scope" value="Bacteria"/>
</dbReference>
<dbReference type="HOGENOM" id="CLU_048577_1_2_6"/>
<dbReference type="OMA" id="EWLHLVD"/>
<dbReference type="UniPathway" id="UPA00031">
    <property type="reaction ID" value="UER00009"/>
</dbReference>
<dbReference type="Proteomes" id="UP000000558">
    <property type="component" value="Chromosome"/>
</dbReference>
<dbReference type="Proteomes" id="UP000002519">
    <property type="component" value="Chromosome"/>
</dbReference>
<dbReference type="GO" id="GO:0005737">
    <property type="term" value="C:cytoplasm"/>
    <property type="evidence" value="ECO:0007669"/>
    <property type="project" value="UniProtKB-SubCell"/>
</dbReference>
<dbReference type="GO" id="GO:0003949">
    <property type="term" value="F:1-(5-phosphoribosyl)-5-[(5-phosphoribosylamino)methylideneamino]imidazole-4-carboxamide isomerase activity"/>
    <property type="evidence" value="ECO:0007669"/>
    <property type="project" value="UniProtKB-UniRule"/>
</dbReference>
<dbReference type="GO" id="GO:0000105">
    <property type="term" value="P:L-histidine biosynthetic process"/>
    <property type="evidence" value="ECO:0007669"/>
    <property type="project" value="UniProtKB-UniRule"/>
</dbReference>
<dbReference type="GO" id="GO:0000162">
    <property type="term" value="P:L-tryptophan biosynthetic process"/>
    <property type="evidence" value="ECO:0007669"/>
    <property type="project" value="TreeGrafter"/>
</dbReference>
<dbReference type="CDD" id="cd04732">
    <property type="entry name" value="HisA"/>
    <property type="match status" value="1"/>
</dbReference>
<dbReference type="FunFam" id="3.20.20.70:FF:000009">
    <property type="entry name" value="1-(5-phosphoribosyl)-5-[(5-phosphoribosylamino)methylideneamino] imidazole-4-carboxamide isomerase"/>
    <property type="match status" value="1"/>
</dbReference>
<dbReference type="Gene3D" id="3.20.20.70">
    <property type="entry name" value="Aldolase class I"/>
    <property type="match status" value="1"/>
</dbReference>
<dbReference type="HAMAP" id="MF_01014">
    <property type="entry name" value="HisA"/>
    <property type="match status" value="1"/>
</dbReference>
<dbReference type="InterPro" id="IPR013785">
    <property type="entry name" value="Aldolase_TIM"/>
</dbReference>
<dbReference type="InterPro" id="IPR006062">
    <property type="entry name" value="His_biosynth"/>
</dbReference>
<dbReference type="InterPro" id="IPR006063">
    <property type="entry name" value="HisA_bact_arch"/>
</dbReference>
<dbReference type="InterPro" id="IPR044524">
    <property type="entry name" value="Isoase_HisA-like"/>
</dbReference>
<dbReference type="InterPro" id="IPR023016">
    <property type="entry name" value="Isoase_HisA-like_bact"/>
</dbReference>
<dbReference type="InterPro" id="IPR011060">
    <property type="entry name" value="RibuloseP-bd_barrel"/>
</dbReference>
<dbReference type="NCBIfam" id="TIGR00007">
    <property type="entry name" value="1-(5-phosphoribosyl)-5-[(5-phosphoribosylamino)methylideneamino]imidazole-4-carboxamide isomerase"/>
    <property type="match status" value="1"/>
</dbReference>
<dbReference type="PANTHER" id="PTHR43090">
    <property type="entry name" value="1-(5-PHOSPHORIBOSYL)-5-[(5-PHOSPHORIBOSYLAMINO)METHYLIDENEAMINO] IMIDAZOLE-4-CARBOXAMIDE ISOMERASE"/>
    <property type="match status" value="1"/>
</dbReference>
<dbReference type="PANTHER" id="PTHR43090:SF2">
    <property type="entry name" value="1-(5-PHOSPHORIBOSYL)-5-[(5-PHOSPHORIBOSYLAMINO)METHYLIDENEAMINO] IMIDAZOLE-4-CARBOXAMIDE ISOMERASE"/>
    <property type="match status" value="1"/>
</dbReference>
<dbReference type="Pfam" id="PF00977">
    <property type="entry name" value="His_biosynth"/>
    <property type="match status" value="1"/>
</dbReference>
<dbReference type="SUPFAM" id="SSF51366">
    <property type="entry name" value="Ribulose-phoshate binding barrel"/>
    <property type="match status" value="1"/>
</dbReference>
<accession>Q9S5G4</accession>
<accession>Q8X8S9</accession>
<organism>
    <name type="scientific">Escherichia coli O157:H7</name>
    <dbReference type="NCBI Taxonomy" id="83334"/>
    <lineage>
        <taxon>Bacteria</taxon>
        <taxon>Pseudomonadati</taxon>
        <taxon>Pseudomonadota</taxon>
        <taxon>Gammaproteobacteria</taxon>
        <taxon>Enterobacterales</taxon>
        <taxon>Enterobacteriaceae</taxon>
        <taxon>Escherichia</taxon>
    </lineage>
</organism>